<proteinExistence type="inferred from homology"/>
<name>FOLD_STRP3</name>
<evidence type="ECO:0000255" key="1">
    <source>
        <dbReference type="HAMAP-Rule" id="MF_01576"/>
    </source>
</evidence>
<comment type="function">
    <text evidence="1">Catalyzes the oxidation of 5,10-methylenetetrahydrofolate to 5,10-methenyltetrahydrofolate and then the hydrolysis of 5,10-methenyltetrahydrofolate to 10-formyltetrahydrofolate.</text>
</comment>
<comment type="catalytic activity">
    <reaction evidence="1">
        <text>(6R)-5,10-methylene-5,6,7,8-tetrahydrofolate + NADP(+) = (6R)-5,10-methenyltetrahydrofolate + NADPH</text>
        <dbReference type="Rhea" id="RHEA:22812"/>
        <dbReference type="ChEBI" id="CHEBI:15636"/>
        <dbReference type="ChEBI" id="CHEBI:57455"/>
        <dbReference type="ChEBI" id="CHEBI:57783"/>
        <dbReference type="ChEBI" id="CHEBI:58349"/>
        <dbReference type="EC" id="1.5.1.5"/>
    </reaction>
</comment>
<comment type="catalytic activity">
    <reaction evidence="1">
        <text>(6R)-5,10-methenyltetrahydrofolate + H2O = (6R)-10-formyltetrahydrofolate + H(+)</text>
        <dbReference type="Rhea" id="RHEA:23700"/>
        <dbReference type="ChEBI" id="CHEBI:15377"/>
        <dbReference type="ChEBI" id="CHEBI:15378"/>
        <dbReference type="ChEBI" id="CHEBI:57455"/>
        <dbReference type="ChEBI" id="CHEBI:195366"/>
        <dbReference type="EC" id="3.5.4.9"/>
    </reaction>
</comment>
<comment type="pathway">
    <text evidence="1">One-carbon metabolism; tetrahydrofolate interconversion.</text>
</comment>
<comment type="subunit">
    <text evidence="1">Homodimer.</text>
</comment>
<comment type="similarity">
    <text evidence="1">Belongs to the tetrahydrofolate dehydrogenase/cyclohydrolase family.</text>
</comment>
<protein>
    <recommendedName>
        <fullName evidence="1">Bifunctional protein FolD</fullName>
    </recommendedName>
    <domain>
        <recommendedName>
            <fullName evidence="1">Methylenetetrahydrofolate dehydrogenase</fullName>
            <ecNumber evidence="1">1.5.1.5</ecNumber>
        </recommendedName>
    </domain>
    <domain>
        <recommendedName>
            <fullName evidence="1">Methenyltetrahydrofolate cyclohydrolase</fullName>
            <ecNumber evidence="1">3.5.4.9</ecNumber>
        </recommendedName>
    </domain>
</protein>
<keyword id="KW-0028">Amino-acid biosynthesis</keyword>
<keyword id="KW-0368">Histidine biosynthesis</keyword>
<keyword id="KW-0378">Hydrolase</keyword>
<keyword id="KW-0486">Methionine biosynthesis</keyword>
<keyword id="KW-0511">Multifunctional enzyme</keyword>
<keyword id="KW-0521">NADP</keyword>
<keyword id="KW-0554">One-carbon metabolism</keyword>
<keyword id="KW-0560">Oxidoreductase</keyword>
<keyword id="KW-0658">Purine biosynthesis</keyword>
<gene>
    <name evidence="1" type="primary">folD</name>
    <name type="ordered locus">SpyM3_1157</name>
</gene>
<dbReference type="EC" id="1.5.1.5" evidence="1"/>
<dbReference type="EC" id="3.5.4.9" evidence="1"/>
<dbReference type="EMBL" id="AE014074">
    <property type="protein sequence ID" value="AAM79764.1"/>
    <property type="molecule type" value="Genomic_DNA"/>
</dbReference>
<dbReference type="RefSeq" id="WP_002989114.1">
    <property type="nucleotide sequence ID" value="NC_004070.1"/>
</dbReference>
<dbReference type="SMR" id="P0DF88"/>
<dbReference type="KEGG" id="spg:SpyM3_1157"/>
<dbReference type="HOGENOM" id="CLU_034045_2_1_9"/>
<dbReference type="UniPathway" id="UPA00193"/>
<dbReference type="Proteomes" id="UP000000564">
    <property type="component" value="Chromosome"/>
</dbReference>
<dbReference type="GO" id="GO:0005829">
    <property type="term" value="C:cytosol"/>
    <property type="evidence" value="ECO:0007669"/>
    <property type="project" value="TreeGrafter"/>
</dbReference>
<dbReference type="GO" id="GO:0004477">
    <property type="term" value="F:methenyltetrahydrofolate cyclohydrolase activity"/>
    <property type="evidence" value="ECO:0007669"/>
    <property type="project" value="UniProtKB-UniRule"/>
</dbReference>
<dbReference type="GO" id="GO:0004488">
    <property type="term" value="F:methylenetetrahydrofolate dehydrogenase (NADP+) activity"/>
    <property type="evidence" value="ECO:0007669"/>
    <property type="project" value="UniProtKB-UniRule"/>
</dbReference>
<dbReference type="GO" id="GO:0000105">
    <property type="term" value="P:L-histidine biosynthetic process"/>
    <property type="evidence" value="ECO:0007669"/>
    <property type="project" value="UniProtKB-KW"/>
</dbReference>
<dbReference type="GO" id="GO:0009086">
    <property type="term" value="P:methionine biosynthetic process"/>
    <property type="evidence" value="ECO:0007669"/>
    <property type="project" value="UniProtKB-KW"/>
</dbReference>
<dbReference type="GO" id="GO:0006164">
    <property type="term" value="P:purine nucleotide biosynthetic process"/>
    <property type="evidence" value="ECO:0007669"/>
    <property type="project" value="UniProtKB-KW"/>
</dbReference>
<dbReference type="GO" id="GO:0035999">
    <property type="term" value="P:tetrahydrofolate interconversion"/>
    <property type="evidence" value="ECO:0007669"/>
    <property type="project" value="UniProtKB-UniRule"/>
</dbReference>
<dbReference type="CDD" id="cd01080">
    <property type="entry name" value="NAD_bind_m-THF_DH_Cyclohyd"/>
    <property type="match status" value="1"/>
</dbReference>
<dbReference type="FunFam" id="3.40.50.10860:FF:000001">
    <property type="entry name" value="Bifunctional protein FolD"/>
    <property type="match status" value="1"/>
</dbReference>
<dbReference type="FunFam" id="3.40.50.720:FF:000094">
    <property type="entry name" value="Bifunctional protein FolD"/>
    <property type="match status" value="1"/>
</dbReference>
<dbReference type="Gene3D" id="3.40.50.10860">
    <property type="entry name" value="Leucine Dehydrogenase, chain A, domain 1"/>
    <property type="match status" value="1"/>
</dbReference>
<dbReference type="Gene3D" id="3.40.50.720">
    <property type="entry name" value="NAD(P)-binding Rossmann-like Domain"/>
    <property type="match status" value="1"/>
</dbReference>
<dbReference type="HAMAP" id="MF_01576">
    <property type="entry name" value="THF_DHG_CYH"/>
    <property type="match status" value="1"/>
</dbReference>
<dbReference type="InterPro" id="IPR046346">
    <property type="entry name" value="Aminoacid_DH-like_N_sf"/>
</dbReference>
<dbReference type="InterPro" id="IPR036291">
    <property type="entry name" value="NAD(P)-bd_dom_sf"/>
</dbReference>
<dbReference type="InterPro" id="IPR000672">
    <property type="entry name" value="THF_DH/CycHdrlase"/>
</dbReference>
<dbReference type="InterPro" id="IPR020630">
    <property type="entry name" value="THF_DH/CycHdrlase_cat_dom"/>
</dbReference>
<dbReference type="InterPro" id="IPR020867">
    <property type="entry name" value="THF_DH/CycHdrlase_CS"/>
</dbReference>
<dbReference type="InterPro" id="IPR020631">
    <property type="entry name" value="THF_DH/CycHdrlase_NAD-bd_dom"/>
</dbReference>
<dbReference type="NCBIfam" id="NF008058">
    <property type="entry name" value="PRK10792.1"/>
    <property type="match status" value="1"/>
</dbReference>
<dbReference type="NCBIfam" id="NF010776">
    <property type="entry name" value="PRK14179.1"/>
    <property type="match status" value="1"/>
</dbReference>
<dbReference type="NCBIfam" id="NF010783">
    <property type="entry name" value="PRK14186.1"/>
    <property type="match status" value="1"/>
</dbReference>
<dbReference type="NCBIfam" id="NF010785">
    <property type="entry name" value="PRK14188.1"/>
    <property type="match status" value="1"/>
</dbReference>
<dbReference type="PANTHER" id="PTHR48099:SF5">
    <property type="entry name" value="C-1-TETRAHYDROFOLATE SYNTHASE, CYTOPLASMIC"/>
    <property type="match status" value="1"/>
</dbReference>
<dbReference type="PANTHER" id="PTHR48099">
    <property type="entry name" value="C-1-TETRAHYDROFOLATE SYNTHASE, CYTOPLASMIC-RELATED"/>
    <property type="match status" value="1"/>
</dbReference>
<dbReference type="Pfam" id="PF00763">
    <property type="entry name" value="THF_DHG_CYH"/>
    <property type="match status" value="1"/>
</dbReference>
<dbReference type="Pfam" id="PF02882">
    <property type="entry name" value="THF_DHG_CYH_C"/>
    <property type="match status" value="1"/>
</dbReference>
<dbReference type="PRINTS" id="PR00085">
    <property type="entry name" value="THFDHDRGNASE"/>
</dbReference>
<dbReference type="SUPFAM" id="SSF53223">
    <property type="entry name" value="Aminoacid dehydrogenase-like, N-terminal domain"/>
    <property type="match status" value="1"/>
</dbReference>
<dbReference type="SUPFAM" id="SSF51735">
    <property type="entry name" value="NAD(P)-binding Rossmann-fold domains"/>
    <property type="match status" value="1"/>
</dbReference>
<dbReference type="PROSITE" id="PS00766">
    <property type="entry name" value="THF_DHG_CYH_1"/>
    <property type="match status" value="1"/>
</dbReference>
<dbReference type="PROSITE" id="PS00767">
    <property type="entry name" value="THF_DHG_CYH_2"/>
    <property type="match status" value="1"/>
</dbReference>
<reference key="1">
    <citation type="journal article" date="2002" name="Proc. Natl. Acad. Sci. U.S.A.">
        <title>Genome sequence of a serotype M3 strain of group A Streptococcus: phage-encoded toxins, the high-virulence phenotype, and clone emergence.</title>
        <authorList>
            <person name="Beres S.B."/>
            <person name="Sylva G.L."/>
            <person name="Barbian K.D."/>
            <person name="Lei B."/>
            <person name="Hoff J.S."/>
            <person name="Mammarella N.D."/>
            <person name="Liu M.-Y."/>
            <person name="Smoot J.C."/>
            <person name="Porcella S.F."/>
            <person name="Parkins L.D."/>
            <person name="Campbell D.S."/>
            <person name="Smith T.M."/>
            <person name="McCormick J.K."/>
            <person name="Leung D.Y.M."/>
            <person name="Schlievert P.M."/>
            <person name="Musser J.M."/>
        </authorList>
    </citation>
    <scope>NUCLEOTIDE SEQUENCE [LARGE SCALE GENOMIC DNA]</scope>
    <source>
        <strain>ATCC BAA-595 / MGAS315</strain>
    </source>
</reference>
<feature type="chain" id="PRO_0000268520" description="Bifunctional protein FolD">
    <location>
        <begin position="1"/>
        <end position="284"/>
    </location>
</feature>
<feature type="binding site" evidence="1">
    <location>
        <begin position="165"/>
        <end position="167"/>
    </location>
    <ligand>
        <name>NADP(+)</name>
        <dbReference type="ChEBI" id="CHEBI:58349"/>
    </ligand>
</feature>
<feature type="binding site" evidence="1">
    <location>
        <position position="190"/>
    </location>
    <ligand>
        <name>NADP(+)</name>
        <dbReference type="ChEBI" id="CHEBI:58349"/>
    </ligand>
</feature>
<organism>
    <name type="scientific">Streptococcus pyogenes serotype M3 (strain ATCC BAA-595 / MGAS315)</name>
    <dbReference type="NCBI Taxonomy" id="198466"/>
    <lineage>
        <taxon>Bacteria</taxon>
        <taxon>Bacillati</taxon>
        <taxon>Bacillota</taxon>
        <taxon>Bacilli</taxon>
        <taxon>Lactobacillales</taxon>
        <taxon>Streptococcaceae</taxon>
        <taxon>Streptococcus</taxon>
    </lineage>
</organism>
<accession>P0DF88</accession>
<accession>Q79XP5</accession>
<accession>Q8K6S8</accession>
<sequence length="284" mass="31096">MTELIDGKALAQKMQQELAAKVNNLKQKKGIVPGLAVILVGDDPASQVYVRNKERAALTVGFKSETVRLSEFICQEELIAVIERYNADNTIHGILVQLPLPNHINDKKIILAIDPKKDVDGFHPMNTGHLWSGRPLMVPCTPSGIMELLREYNVNLEGKHAVIIGRSNIVGKPMAQLLLDKNATVTLTHSRTRQLEEVCRCADVLIVAIGQGHFITKQYIKEGAIVIDVGMNRDDNGKLIGDVAFDEVAEVAAKITPVPGGVGPMTIAMLLEQTYQSALRSTHK</sequence>